<proteinExistence type="evidence at protein level"/>
<sequence>MKRSLQALYCQLLSFLLTLALTKALVLAVHEPSPRESLQTLPSGSPPGTMVTAPHSPTRLSSVLTLNPTPDGPSSQAAATLETTVSHPEGHPPTDTTSTVMGTAAVPHPESPLPTGSPPAAMTTTPSHSESLPPGDATPTTTLPTKPAGTTSRPTVAPRATTRRPPRPPGSSRKGAGGSTRTLTPVPGGHLARKESQRGRNQSSAHLGPKRPLGKIFQIYKGNFTGSAEPDPSALTPRTPLGGYFSSTQPQTVSPATAPRSTSRVPPTTSLVPVKDKPGFIRSNQGSGPILTSPGGEPAATAATGAPASTQPAPVPSQSPHGDVQDSASHSDSWLAVTPDTDRPTSASSGVFTAATGPTQAAFDATVSAPSPGIPQGPSATPQAPTRPSGVSESTVSPAEEEAEASPTTTDRGPRPLSTVLSTATGNFLNRLVPAGTWKPGTVANISHVAEGDKPQHRATICLSKMDIAWVIVAISVPISSCSVLLTVCCMRRKKKTANPENNLSYWNNAITMDYFNRHAVELPREIQSLETSEDQLSEPRSPANGDYRDTGMVLVNPFCQETLFVGNDQVSEI</sequence>
<protein>
    <recommendedName>
        <fullName>Transmembrane protein 108</fullName>
    </recommendedName>
    <alternativeName>
        <fullName evidence="7">Retrolinkin</fullName>
    </alternativeName>
</protein>
<evidence type="ECO:0000255" key="1"/>
<evidence type="ECO:0000256" key="2">
    <source>
        <dbReference type="SAM" id="MobiDB-lite"/>
    </source>
</evidence>
<evidence type="ECO:0000269" key="3">
    <source>
    </source>
</evidence>
<evidence type="ECO:0000269" key="4">
    <source>
    </source>
</evidence>
<evidence type="ECO:0000269" key="5">
    <source>
    </source>
</evidence>
<evidence type="ECO:0000269" key="6">
    <source>
    </source>
</evidence>
<evidence type="ECO:0000303" key="7">
    <source>
    </source>
</evidence>
<evidence type="ECO:0000312" key="8">
    <source>
        <dbReference type="MGI" id="MGI:1932411"/>
    </source>
</evidence>
<gene>
    <name evidence="8" type="primary">Tmem108</name>
</gene>
<name>TM108_MOUSE</name>
<reference key="1">
    <citation type="journal article" date="2005" name="Science">
        <title>The transcriptional landscape of the mammalian genome.</title>
        <authorList>
            <person name="Carninci P."/>
            <person name="Kasukawa T."/>
            <person name="Katayama S."/>
            <person name="Gough J."/>
            <person name="Frith M.C."/>
            <person name="Maeda N."/>
            <person name="Oyama R."/>
            <person name="Ravasi T."/>
            <person name="Lenhard B."/>
            <person name="Wells C."/>
            <person name="Kodzius R."/>
            <person name="Shimokawa K."/>
            <person name="Bajic V.B."/>
            <person name="Brenner S.E."/>
            <person name="Batalov S."/>
            <person name="Forrest A.R."/>
            <person name="Zavolan M."/>
            <person name="Davis M.J."/>
            <person name="Wilming L.G."/>
            <person name="Aidinis V."/>
            <person name="Allen J.E."/>
            <person name="Ambesi-Impiombato A."/>
            <person name="Apweiler R."/>
            <person name="Aturaliya R.N."/>
            <person name="Bailey T.L."/>
            <person name="Bansal M."/>
            <person name="Baxter L."/>
            <person name="Beisel K.W."/>
            <person name="Bersano T."/>
            <person name="Bono H."/>
            <person name="Chalk A.M."/>
            <person name="Chiu K.P."/>
            <person name="Choudhary V."/>
            <person name="Christoffels A."/>
            <person name="Clutterbuck D.R."/>
            <person name="Crowe M.L."/>
            <person name="Dalla E."/>
            <person name="Dalrymple B.P."/>
            <person name="de Bono B."/>
            <person name="Della Gatta G."/>
            <person name="di Bernardo D."/>
            <person name="Down T."/>
            <person name="Engstrom P."/>
            <person name="Fagiolini M."/>
            <person name="Faulkner G."/>
            <person name="Fletcher C.F."/>
            <person name="Fukushima T."/>
            <person name="Furuno M."/>
            <person name="Futaki S."/>
            <person name="Gariboldi M."/>
            <person name="Georgii-Hemming P."/>
            <person name="Gingeras T.R."/>
            <person name="Gojobori T."/>
            <person name="Green R.E."/>
            <person name="Gustincich S."/>
            <person name="Harbers M."/>
            <person name="Hayashi Y."/>
            <person name="Hensch T.K."/>
            <person name="Hirokawa N."/>
            <person name="Hill D."/>
            <person name="Huminiecki L."/>
            <person name="Iacono M."/>
            <person name="Ikeo K."/>
            <person name="Iwama A."/>
            <person name="Ishikawa T."/>
            <person name="Jakt M."/>
            <person name="Kanapin A."/>
            <person name="Katoh M."/>
            <person name="Kawasawa Y."/>
            <person name="Kelso J."/>
            <person name="Kitamura H."/>
            <person name="Kitano H."/>
            <person name="Kollias G."/>
            <person name="Krishnan S.P."/>
            <person name="Kruger A."/>
            <person name="Kummerfeld S.K."/>
            <person name="Kurochkin I.V."/>
            <person name="Lareau L.F."/>
            <person name="Lazarevic D."/>
            <person name="Lipovich L."/>
            <person name="Liu J."/>
            <person name="Liuni S."/>
            <person name="McWilliam S."/>
            <person name="Madan Babu M."/>
            <person name="Madera M."/>
            <person name="Marchionni L."/>
            <person name="Matsuda H."/>
            <person name="Matsuzawa S."/>
            <person name="Miki H."/>
            <person name="Mignone F."/>
            <person name="Miyake S."/>
            <person name="Morris K."/>
            <person name="Mottagui-Tabar S."/>
            <person name="Mulder N."/>
            <person name="Nakano N."/>
            <person name="Nakauchi H."/>
            <person name="Ng P."/>
            <person name="Nilsson R."/>
            <person name="Nishiguchi S."/>
            <person name="Nishikawa S."/>
            <person name="Nori F."/>
            <person name="Ohara O."/>
            <person name="Okazaki Y."/>
            <person name="Orlando V."/>
            <person name="Pang K.C."/>
            <person name="Pavan W.J."/>
            <person name="Pavesi G."/>
            <person name="Pesole G."/>
            <person name="Petrovsky N."/>
            <person name="Piazza S."/>
            <person name="Reed J."/>
            <person name="Reid J.F."/>
            <person name="Ring B.Z."/>
            <person name="Ringwald M."/>
            <person name="Rost B."/>
            <person name="Ruan Y."/>
            <person name="Salzberg S.L."/>
            <person name="Sandelin A."/>
            <person name="Schneider C."/>
            <person name="Schoenbach C."/>
            <person name="Sekiguchi K."/>
            <person name="Semple C.A."/>
            <person name="Seno S."/>
            <person name="Sessa L."/>
            <person name="Sheng Y."/>
            <person name="Shibata Y."/>
            <person name="Shimada H."/>
            <person name="Shimada K."/>
            <person name="Silva D."/>
            <person name="Sinclair B."/>
            <person name="Sperling S."/>
            <person name="Stupka E."/>
            <person name="Sugiura K."/>
            <person name="Sultana R."/>
            <person name="Takenaka Y."/>
            <person name="Taki K."/>
            <person name="Tammoja K."/>
            <person name="Tan S.L."/>
            <person name="Tang S."/>
            <person name="Taylor M.S."/>
            <person name="Tegner J."/>
            <person name="Teichmann S.A."/>
            <person name="Ueda H.R."/>
            <person name="van Nimwegen E."/>
            <person name="Verardo R."/>
            <person name="Wei C.L."/>
            <person name="Yagi K."/>
            <person name="Yamanishi H."/>
            <person name="Zabarovsky E."/>
            <person name="Zhu S."/>
            <person name="Zimmer A."/>
            <person name="Hide W."/>
            <person name="Bult C."/>
            <person name="Grimmond S.M."/>
            <person name="Teasdale R.D."/>
            <person name="Liu E.T."/>
            <person name="Brusic V."/>
            <person name="Quackenbush J."/>
            <person name="Wahlestedt C."/>
            <person name="Mattick J.S."/>
            <person name="Hume D.A."/>
            <person name="Kai C."/>
            <person name="Sasaki D."/>
            <person name="Tomaru Y."/>
            <person name="Fukuda S."/>
            <person name="Kanamori-Katayama M."/>
            <person name="Suzuki M."/>
            <person name="Aoki J."/>
            <person name="Arakawa T."/>
            <person name="Iida J."/>
            <person name="Imamura K."/>
            <person name="Itoh M."/>
            <person name="Kato T."/>
            <person name="Kawaji H."/>
            <person name="Kawagashira N."/>
            <person name="Kawashima T."/>
            <person name="Kojima M."/>
            <person name="Kondo S."/>
            <person name="Konno H."/>
            <person name="Nakano K."/>
            <person name="Ninomiya N."/>
            <person name="Nishio T."/>
            <person name="Okada M."/>
            <person name="Plessy C."/>
            <person name="Shibata K."/>
            <person name="Shiraki T."/>
            <person name="Suzuki S."/>
            <person name="Tagami M."/>
            <person name="Waki K."/>
            <person name="Watahiki A."/>
            <person name="Okamura-Oho Y."/>
            <person name="Suzuki H."/>
            <person name="Kawai J."/>
            <person name="Hayashizaki Y."/>
        </authorList>
    </citation>
    <scope>NUCLEOTIDE SEQUENCE [LARGE SCALE MRNA]</scope>
    <source>
        <strain>C57BL/6J</strain>
        <tissue>Cerebellum</tissue>
        <tissue>Heart</tissue>
        <tissue>Hippocampus</tissue>
    </source>
</reference>
<reference key="2">
    <citation type="journal article" date="2004" name="Genome Res.">
        <title>The status, quality, and expansion of the NIH full-length cDNA project: the Mammalian Gene Collection (MGC).</title>
        <authorList>
            <consortium name="The MGC Project Team"/>
        </authorList>
    </citation>
    <scope>NUCLEOTIDE SEQUENCE [LARGE SCALE MRNA]</scope>
    <source>
        <strain>C57BL/6J</strain>
        <tissue>Brain</tissue>
    </source>
</reference>
<reference key="3">
    <citation type="journal article" date="2007" name="Proc. Natl. Acad. Sci. U.S.A.">
        <title>Retrolinkin, a membrane protein, plays an important role in retrograde axonal transport.</title>
        <authorList>
            <person name="Liu J.J."/>
            <person name="Ding J."/>
            <person name="Wu C."/>
            <person name="Bhagavatula P."/>
            <person name="Cui B."/>
            <person name="Chu S."/>
            <person name="Mobley W.C."/>
            <person name="Yang Y."/>
        </authorList>
    </citation>
    <scope>FUNCTION</scope>
    <scope>DEVELOPMENTAL STAGE</scope>
    <scope>TISSUE SPECIFICITY</scope>
    <scope>INTERACTION WITH DST</scope>
    <scope>SUBCELLULAR LOCATION</scope>
    <scope>GLYCOSYLATION</scope>
</reference>
<reference key="4">
    <citation type="journal article" date="2011" name="Mol. Biol. Cell">
        <title>Retrolinkin cooperates with endophilin A1 to mediate BDNF-TrkB early endocytic trafficking and signaling from early endosomes.</title>
        <authorList>
            <person name="Fu X."/>
            <person name="Yang Y."/>
            <person name="Xu C."/>
            <person name="Niu Y."/>
            <person name="Chen T."/>
            <person name="Zhou Q."/>
            <person name="Liu J.J."/>
        </authorList>
    </citation>
    <scope>FUNCTION</scope>
    <scope>SUBCELLULAR LOCATION</scope>
    <scope>TISSUE SPECIFICITY</scope>
    <scope>INTERACTION WITH SH3GL2</scope>
</reference>
<reference key="5">
    <citation type="journal article" date="2016" name="Mol. Biol. Cell">
        <title>Retrolinkin recruits the WAVE1 protein complex to facilitate BDNF-induced TrkB endocytosis and dendrite outgrowth.</title>
        <authorList>
            <person name="Xu C."/>
            <person name="Fu X."/>
            <person name="Zhu S."/>
            <person name="Liu J.J."/>
        </authorList>
    </citation>
    <scope>FUNCTION</scope>
    <scope>INTERACTION WITH CYFIP2 AND CYFIP1</scope>
</reference>
<reference key="6">
    <citation type="journal article" date="2017" name="Proc. Natl. Acad. Sci. U.S.A.">
        <title>Transmembrane protein 108 is required for glutamatergic transmission in dentate gyrus.</title>
        <authorList>
            <person name="Jiao H.F."/>
            <person name="Sun X.D."/>
            <person name="Bates R."/>
            <person name="Xiong L."/>
            <person name="Zhang L."/>
            <person name="Liu F."/>
            <person name="Li L."/>
            <person name="Zhang H.S."/>
            <person name="Wang S.Q."/>
            <person name="Xiong M.T."/>
            <person name="Patel M."/>
            <person name="Stranahan A.M."/>
            <person name="Xiong W.C."/>
            <person name="Li B.M."/>
            <person name="Mei L."/>
        </authorList>
    </citation>
    <scope>FUNCTION</scope>
    <scope>DISRUPTION PHENOTYPE</scope>
    <scope>SUBCELLULAR LOCATION</scope>
    <scope>TISSUE SPECIFICITY</scope>
    <scope>DEVELOPMENTAL STAGE</scope>
</reference>
<comment type="function">
    <text evidence="3 4 5 6">Transmembrane protein required for proper cognitive functions. Involved in the development of dentate gyrus (DG) neuron circuitry, is necessary for AMPA receptors surface expression and proper excitatory postsynaptic currents of DG granule neurons (PubMed:28096412). Regulates the organization and stability of the microtubule network of sensory neurons to allow axonal transport. Through the interaction with DST, mediates the docking of the dynein/dynactin motor complex to vesicle cargos for retrograde axonal transport (PubMed:17287360). In hippocampal neurons, required for BDNF-dependent dendrite outgrowth (PubMed:21849472). Cooperates with SH3GL2 and recruits the WAVE1 complex to facilitate actin-dependent BDNF:NTRK2 early endocytic trafficking and mediate signaling from early endosomes (PubMed:21849472, PubMed:27605705).</text>
</comment>
<comment type="subunit">
    <text evidence="3 4 5">Interacts with DST (isoform 1) (PubMed:17287360). Interacts with SH3GL2 (PubMed:21849472). Interacts (via N-terminus) with CYFIP1 and CYFIP2; the interactions associate TMEM108 with the WAVE1 complex (PubMed:27605705).</text>
</comment>
<comment type="subcellular location">
    <subcellularLocation>
        <location evidence="3">Membrane</location>
        <topology evidence="1">Multi-pass membrane protein</topology>
    </subcellularLocation>
    <subcellularLocation>
        <location evidence="6">Postsynaptic density</location>
    </subcellularLocation>
    <subcellularLocation>
        <location evidence="3">Endosome membrane</location>
    </subcellularLocation>
    <subcellularLocation>
        <location evidence="3 4">Cell projection</location>
        <location evidence="3 4">Axon</location>
    </subcellularLocation>
    <subcellularLocation>
        <location evidence="4">Cell projection</location>
        <location evidence="4">Dendrite</location>
    </subcellularLocation>
    <subcellularLocation>
        <location evidence="4">Early endosome</location>
    </subcellularLocation>
</comment>
<comment type="tissue specificity">
    <text evidence="3 4 6">Expressed in the nervous system tissues, such as hippocampus and spinal cord, is barely detectable in peripheral tissues such as heart, lung, liver, kidney and muscle (PubMed:17287360, PubMed:28096412). In brain, highly expressed in dentate gyrus neurons and expressed in cortex, olfactory bulb, ammon's horn, cerebellum, hypothalamus and striatum (PubMed:21849472, PubMed:28096412).</text>
</comment>
<comment type="developmental stage">
    <text evidence="3 6">In brain, detectable as early as 12 dpc and the level increases persistently through later embryonic stages to the adult age (PubMed:17287360). In the hippocampus, undetectable at postnatal day 1 (P1), detected at P7, the levels peak between P15 and P21 to remain at a high level during adulthood (PubMed:28096412).</text>
</comment>
<comment type="PTM">
    <text evidence="3">Glycosylated.</text>
</comment>
<comment type="disruption phenotype">
    <text evidence="6">Mutants are viable and show no difference in body weight or locomotor activity (PubMed:28096412). They are impaired in sensorimotor gating, spatial recognition memory and suppressed fear memory consolidation (PubMed:28096412). Spine density of dentate gyrus granule neurons is significantly reduced compare to wild-type animals, which is associated with decreased spine width and increased spine length (PubMed:28096412).</text>
</comment>
<dbReference type="EMBL" id="AK044989">
    <property type="protein sequence ID" value="BAC32171.1"/>
    <property type="molecule type" value="mRNA"/>
</dbReference>
<dbReference type="EMBL" id="AK141589">
    <property type="protein sequence ID" value="BAE24751.1"/>
    <property type="molecule type" value="mRNA"/>
</dbReference>
<dbReference type="EMBL" id="AK052330">
    <property type="protein sequence ID" value="BAC34940.1"/>
    <property type="molecule type" value="mRNA"/>
</dbReference>
<dbReference type="EMBL" id="AK047474">
    <property type="protein sequence ID" value="BAC33068.1"/>
    <property type="molecule type" value="mRNA"/>
</dbReference>
<dbReference type="EMBL" id="BC052085">
    <property type="protein sequence ID" value="AAH52085.2"/>
    <property type="molecule type" value="mRNA"/>
</dbReference>
<dbReference type="CCDS" id="CCDS23455.1"/>
<dbReference type="RefSeq" id="NP_001346394.1">
    <property type="nucleotide sequence ID" value="NM_001359465.1"/>
</dbReference>
<dbReference type="RefSeq" id="NP_848753.1">
    <property type="nucleotide sequence ID" value="NM_178638.4"/>
</dbReference>
<dbReference type="RefSeq" id="XP_006511931.1">
    <property type="nucleotide sequence ID" value="XM_006511868.4"/>
</dbReference>
<dbReference type="RefSeq" id="XP_006511932.1">
    <property type="nucleotide sequence ID" value="XM_006511869.3"/>
</dbReference>
<dbReference type="RefSeq" id="XP_030100591.1">
    <property type="nucleotide sequence ID" value="XM_030244731.2"/>
</dbReference>
<dbReference type="FunCoup" id="Q8BHE4">
    <property type="interactions" value="34"/>
</dbReference>
<dbReference type="STRING" id="10090.ENSMUSP00000046021"/>
<dbReference type="GlyGen" id="Q8BHE4">
    <property type="glycosylation" value="4 sites, 3 N-linked glycans (3 sites)"/>
</dbReference>
<dbReference type="iPTMnet" id="Q8BHE4"/>
<dbReference type="PhosphoSitePlus" id="Q8BHE4"/>
<dbReference type="jPOST" id="Q8BHE4"/>
<dbReference type="PaxDb" id="10090-ENSMUSP00000140027"/>
<dbReference type="ProteomicsDB" id="262825"/>
<dbReference type="Antibodypedia" id="17731">
    <property type="antibodies" value="88 antibodies from 19 providers"/>
</dbReference>
<dbReference type="DNASU" id="81907"/>
<dbReference type="Ensembl" id="ENSMUST00000049452.15">
    <property type="protein sequence ID" value="ENSMUSP00000046021.9"/>
    <property type="gene ID" value="ENSMUSG00000042757.17"/>
</dbReference>
<dbReference type="Ensembl" id="ENSMUST00000189066.2">
    <property type="protein sequence ID" value="ENSMUSP00000141160.2"/>
    <property type="gene ID" value="ENSMUSG00000042757.17"/>
</dbReference>
<dbReference type="Ensembl" id="ENSMUST00000189588.7">
    <property type="protein sequence ID" value="ENSMUSP00000140027.2"/>
    <property type="gene ID" value="ENSMUSG00000042757.17"/>
</dbReference>
<dbReference type="GeneID" id="81907"/>
<dbReference type="KEGG" id="mmu:81907"/>
<dbReference type="UCSC" id="uc009rgx.2">
    <property type="organism name" value="mouse"/>
</dbReference>
<dbReference type="AGR" id="MGI:1932411"/>
<dbReference type="CTD" id="66000"/>
<dbReference type="MGI" id="MGI:1932411">
    <property type="gene designation" value="Tmem108"/>
</dbReference>
<dbReference type="VEuPathDB" id="HostDB:ENSMUSG00000042757"/>
<dbReference type="eggNOG" id="ENOG502RXTY">
    <property type="taxonomic scope" value="Eukaryota"/>
</dbReference>
<dbReference type="GeneTree" id="ENSGT00390000000626"/>
<dbReference type="HOGENOM" id="CLU_040547_1_0_1"/>
<dbReference type="InParanoid" id="Q8BHE4"/>
<dbReference type="OMA" id="KPMGATS"/>
<dbReference type="OrthoDB" id="9944393at2759"/>
<dbReference type="PhylomeDB" id="Q8BHE4"/>
<dbReference type="TreeFam" id="TF336337"/>
<dbReference type="BioGRID-ORCS" id="81907">
    <property type="hits" value="1 hit in 75 CRISPR screens"/>
</dbReference>
<dbReference type="ChiTaRS" id="Tmem108">
    <property type="organism name" value="mouse"/>
</dbReference>
<dbReference type="PRO" id="PR:Q8BHE4"/>
<dbReference type="Proteomes" id="UP000000589">
    <property type="component" value="Chromosome 9"/>
</dbReference>
<dbReference type="RNAct" id="Q8BHE4">
    <property type="molecule type" value="protein"/>
</dbReference>
<dbReference type="Bgee" id="ENSMUSG00000042757">
    <property type="expression patterns" value="Expressed in placenta labyrinth and 182 other cell types or tissues"/>
</dbReference>
<dbReference type="ExpressionAtlas" id="Q8BHE4">
    <property type="expression patterns" value="baseline and differential"/>
</dbReference>
<dbReference type="GO" id="GO:0030424">
    <property type="term" value="C:axon"/>
    <property type="evidence" value="ECO:0000314"/>
    <property type="project" value="UniProtKB"/>
</dbReference>
<dbReference type="GO" id="GO:1904115">
    <property type="term" value="C:axon cytoplasm"/>
    <property type="evidence" value="ECO:0007669"/>
    <property type="project" value="GOC"/>
</dbReference>
<dbReference type="GO" id="GO:0030425">
    <property type="term" value="C:dendrite"/>
    <property type="evidence" value="ECO:0007669"/>
    <property type="project" value="UniProtKB-SubCell"/>
</dbReference>
<dbReference type="GO" id="GO:0005769">
    <property type="term" value="C:early endosome"/>
    <property type="evidence" value="ECO:0000314"/>
    <property type="project" value="UniProtKB"/>
</dbReference>
<dbReference type="GO" id="GO:0010008">
    <property type="term" value="C:endosome membrane"/>
    <property type="evidence" value="ECO:0000314"/>
    <property type="project" value="UniProtKB"/>
</dbReference>
<dbReference type="GO" id="GO:0098978">
    <property type="term" value="C:glutamatergic synapse"/>
    <property type="evidence" value="ECO:0000314"/>
    <property type="project" value="SynGO"/>
</dbReference>
<dbReference type="GO" id="GO:0014069">
    <property type="term" value="C:postsynaptic density"/>
    <property type="evidence" value="ECO:0000314"/>
    <property type="project" value="UniProtKB"/>
</dbReference>
<dbReference type="GO" id="GO:0098839">
    <property type="term" value="C:postsynaptic density membrane"/>
    <property type="evidence" value="ECO:0000314"/>
    <property type="project" value="SynGO"/>
</dbReference>
<dbReference type="GO" id="GO:0036477">
    <property type="term" value="C:somatodendritic compartment"/>
    <property type="evidence" value="ECO:0000314"/>
    <property type="project" value="UniProtKB"/>
</dbReference>
<dbReference type="GO" id="GO:1990416">
    <property type="term" value="P:cellular response to brain-derived neurotrophic factor stimulus"/>
    <property type="evidence" value="ECO:0000315"/>
    <property type="project" value="UniProtKB"/>
</dbReference>
<dbReference type="GO" id="GO:0097484">
    <property type="term" value="P:dendrite extension"/>
    <property type="evidence" value="ECO:0000315"/>
    <property type="project" value="UniProtKB"/>
</dbReference>
<dbReference type="GO" id="GO:0021542">
    <property type="term" value="P:dentate gyrus development"/>
    <property type="evidence" value="ECO:0000315"/>
    <property type="project" value="UniProtKB"/>
</dbReference>
<dbReference type="GO" id="GO:0098815">
    <property type="term" value="P:modulation of excitatory postsynaptic potential"/>
    <property type="evidence" value="ECO:0000315"/>
    <property type="project" value="UniProtKB"/>
</dbReference>
<dbReference type="GO" id="GO:0031175">
    <property type="term" value="P:neuron projection development"/>
    <property type="evidence" value="ECO:0000315"/>
    <property type="project" value="UniProtKB"/>
</dbReference>
<dbReference type="GO" id="GO:0051388">
    <property type="term" value="P:positive regulation of neurotrophin TRK receptor signaling pathway"/>
    <property type="evidence" value="ECO:0000315"/>
    <property type="project" value="UniProtKB"/>
</dbReference>
<dbReference type="GO" id="GO:0097106">
    <property type="term" value="P:postsynaptic density organization"/>
    <property type="evidence" value="ECO:0000315"/>
    <property type="project" value="UniProtKB"/>
</dbReference>
<dbReference type="GO" id="GO:0006898">
    <property type="term" value="P:receptor-mediated endocytosis"/>
    <property type="evidence" value="ECO:0000315"/>
    <property type="project" value="UniProtKB"/>
</dbReference>
<dbReference type="GO" id="GO:0098696">
    <property type="term" value="P:regulation of neurotransmitter receptor localization to postsynaptic specialization membrane"/>
    <property type="evidence" value="ECO:0000314"/>
    <property type="project" value="SynGO"/>
</dbReference>
<dbReference type="GO" id="GO:0008090">
    <property type="term" value="P:retrograde axonal transport"/>
    <property type="evidence" value="ECO:0000314"/>
    <property type="project" value="UniProtKB"/>
</dbReference>
<dbReference type="InterPro" id="IPR031508">
    <property type="entry name" value="TMEM108"/>
</dbReference>
<dbReference type="PANTHER" id="PTHR28673">
    <property type="entry name" value="TRANSMEMBRANE PROTEIN 108"/>
    <property type="match status" value="1"/>
</dbReference>
<dbReference type="PANTHER" id="PTHR28673:SF1">
    <property type="entry name" value="TRANSMEMBRANE PROTEIN 108"/>
    <property type="match status" value="1"/>
</dbReference>
<dbReference type="Pfam" id="PF15759">
    <property type="entry name" value="TMEM108"/>
    <property type="match status" value="1"/>
</dbReference>
<accession>Q8BHE4</accession>
<accession>Q80WR9</accession>
<feature type="chain" id="PRO_0000243914" description="Transmembrane protein 108">
    <location>
        <begin position="1"/>
        <end position="574"/>
    </location>
</feature>
<feature type="transmembrane region" description="Helical" evidence="1">
    <location>
        <begin position="9"/>
        <end position="29"/>
    </location>
</feature>
<feature type="transmembrane region" description="Helical" evidence="1">
    <location>
        <begin position="468"/>
        <end position="488"/>
    </location>
</feature>
<feature type="region of interest" description="Interaction with SH3GL2" evidence="4">
    <location>
        <begin position="31"/>
        <end position="169"/>
    </location>
</feature>
<feature type="region of interest" description="Disordered" evidence="2">
    <location>
        <begin position="32"/>
        <end position="352"/>
    </location>
</feature>
<feature type="region of interest" description="Interaction with DST (isoform 1)" evidence="3">
    <location>
        <begin position="173"/>
        <end position="406"/>
    </location>
</feature>
<feature type="region of interest" description="Disordered" evidence="2">
    <location>
        <begin position="364"/>
        <end position="417"/>
    </location>
</feature>
<feature type="region of interest" description="Interaction with CYFIP2" evidence="5">
    <location>
        <begin position="489"/>
        <end position="574"/>
    </location>
</feature>
<feature type="compositionally biased region" description="Polar residues" evidence="2">
    <location>
        <begin position="58"/>
        <end position="86"/>
    </location>
</feature>
<feature type="compositionally biased region" description="Low complexity" evidence="2">
    <location>
        <begin position="132"/>
        <end position="160"/>
    </location>
</feature>
<feature type="compositionally biased region" description="Polar residues" evidence="2">
    <location>
        <begin position="245"/>
        <end position="271"/>
    </location>
</feature>
<feature type="compositionally biased region" description="Low complexity" evidence="2">
    <location>
        <begin position="292"/>
        <end position="312"/>
    </location>
</feature>
<feature type="compositionally biased region" description="Polar residues" evidence="2">
    <location>
        <begin position="316"/>
        <end position="332"/>
    </location>
</feature>
<keyword id="KW-0966">Cell projection</keyword>
<keyword id="KW-0967">Endosome</keyword>
<keyword id="KW-0325">Glycoprotein</keyword>
<keyword id="KW-0472">Membrane</keyword>
<keyword id="KW-1185">Reference proteome</keyword>
<keyword id="KW-0770">Synapse</keyword>
<keyword id="KW-0812">Transmembrane</keyword>
<keyword id="KW-1133">Transmembrane helix</keyword>
<organism>
    <name type="scientific">Mus musculus</name>
    <name type="common">Mouse</name>
    <dbReference type="NCBI Taxonomy" id="10090"/>
    <lineage>
        <taxon>Eukaryota</taxon>
        <taxon>Metazoa</taxon>
        <taxon>Chordata</taxon>
        <taxon>Craniata</taxon>
        <taxon>Vertebrata</taxon>
        <taxon>Euteleostomi</taxon>
        <taxon>Mammalia</taxon>
        <taxon>Eutheria</taxon>
        <taxon>Euarchontoglires</taxon>
        <taxon>Glires</taxon>
        <taxon>Rodentia</taxon>
        <taxon>Myomorpha</taxon>
        <taxon>Muroidea</taxon>
        <taxon>Muridae</taxon>
        <taxon>Murinae</taxon>
        <taxon>Mus</taxon>
        <taxon>Mus</taxon>
    </lineage>
</organism>